<protein>
    <recommendedName>
        <fullName>60S ribosomal subunit assembly/export protein LOC1</fullName>
    </recommendedName>
</protein>
<evidence type="ECO:0000250" key="1"/>
<evidence type="ECO:0000255" key="2"/>
<evidence type="ECO:0000256" key="3">
    <source>
        <dbReference type="SAM" id="MobiDB-lite"/>
    </source>
</evidence>
<evidence type="ECO:0000305" key="4"/>
<comment type="function">
    <text evidence="1">Required for efficient assembly and nuclear export of the 60S ribosomal subunit.</text>
</comment>
<comment type="subunit">
    <text evidence="1">Component of the 66S pre-ribosomal particle.</text>
</comment>
<comment type="subcellular location">
    <subcellularLocation>
        <location evidence="1">Nucleus</location>
        <location evidence="1">Nucleolus</location>
    </subcellularLocation>
</comment>
<comment type="similarity">
    <text evidence="4">Belongs to the LOC1 family.</text>
</comment>
<reference key="1">
    <citation type="journal article" date="2009" name="Nature">
        <title>Evolution of pathogenicity and sexual reproduction in eight Candida genomes.</title>
        <authorList>
            <person name="Butler G."/>
            <person name="Rasmussen M.D."/>
            <person name="Lin M.F."/>
            <person name="Santos M.A.S."/>
            <person name="Sakthikumar S."/>
            <person name="Munro C.A."/>
            <person name="Rheinbay E."/>
            <person name="Grabherr M."/>
            <person name="Forche A."/>
            <person name="Reedy J.L."/>
            <person name="Agrafioti I."/>
            <person name="Arnaud M.B."/>
            <person name="Bates S."/>
            <person name="Brown A.J.P."/>
            <person name="Brunke S."/>
            <person name="Costanzo M.C."/>
            <person name="Fitzpatrick D.A."/>
            <person name="de Groot P.W.J."/>
            <person name="Harris D."/>
            <person name="Hoyer L.L."/>
            <person name="Hube B."/>
            <person name="Klis F.M."/>
            <person name="Kodira C."/>
            <person name="Lennard N."/>
            <person name="Logue M.E."/>
            <person name="Martin R."/>
            <person name="Neiman A.M."/>
            <person name="Nikolaou E."/>
            <person name="Quail M.A."/>
            <person name="Quinn J."/>
            <person name="Santos M.C."/>
            <person name="Schmitzberger F.F."/>
            <person name="Sherlock G."/>
            <person name="Shah P."/>
            <person name="Silverstein K.A.T."/>
            <person name="Skrzypek M.S."/>
            <person name="Soll D."/>
            <person name="Staggs R."/>
            <person name="Stansfield I."/>
            <person name="Stumpf M.P.H."/>
            <person name="Sudbery P.E."/>
            <person name="Srikantha T."/>
            <person name="Zeng Q."/>
            <person name="Berman J."/>
            <person name="Berriman M."/>
            <person name="Heitman J."/>
            <person name="Gow N.A.R."/>
            <person name="Lorenz M.C."/>
            <person name="Birren B.W."/>
            <person name="Kellis M."/>
            <person name="Cuomo C.A."/>
        </authorList>
    </citation>
    <scope>NUCLEOTIDE SEQUENCE [LARGE SCALE GENOMIC DNA]</scope>
    <source>
        <strain>ATCC 6260 / CBS 566 / DSM 6381 / JCM 1539 / NBRC 10279 / NRRL Y-324</strain>
    </source>
</reference>
<name>LOC1_PICGU</name>
<proteinExistence type="inferred from homology"/>
<organism>
    <name type="scientific">Meyerozyma guilliermondii (strain ATCC 6260 / CBS 566 / DSM 6381 / JCM 1539 / NBRC 10279 / NRRL Y-324)</name>
    <name type="common">Yeast</name>
    <name type="synonym">Candida guilliermondii</name>
    <dbReference type="NCBI Taxonomy" id="294746"/>
    <lineage>
        <taxon>Eukaryota</taxon>
        <taxon>Fungi</taxon>
        <taxon>Dikarya</taxon>
        <taxon>Ascomycota</taxon>
        <taxon>Saccharomycotina</taxon>
        <taxon>Pichiomycetes</taxon>
        <taxon>Debaryomycetaceae</taxon>
        <taxon>Meyerozyma</taxon>
    </lineage>
</organism>
<sequence>MATRQSKTAKRNKTQNQKRNVESEVFTDSAARNLLENQPKLTPKSKVKKPSKLAVKKQQAKVRLYGAKNGREYKESELQIPVLNKAVVPGVKAKKGKKGKVFVDDNDNLTMERLVKSINDKYDKVNESKLEKSRRLEEIREVKRREMEKKEEQKKNKLDDKKKELKNKASVARANRRKNAKEAAKEAESDEPRKKKVSFA</sequence>
<feature type="chain" id="PRO_0000308801" description="60S ribosomal subunit assembly/export protein LOC1">
    <location>
        <begin position="1"/>
        <end position="200"/>
    </location>
</feature>
<feature type="region of interest" description="Disordered" evidence="3">
    <location>
        <begin position="1"/>
        <end position="58"/>
    </location>
</feature>
<feature type="region of interest" description="Disordered" evidence="3">
    <location>
        <begin position="143"/>
        <end position="200"/>
    </location>
</feature>
<feature type="coiled-coil region" evidence="2">
    <location>
        <begin position="121"/>
        <end position="191"/>
    </location>
</feature>
<feature type="compositionally biased region" description="Basic residues" evidence="3">
    <location>
        <begin position="43"/>
        <end position="58"/>
    </location>
</feature>
<feature type="compositionally biased region" description="Basic and acidic residues" evidence="3">
    <location>
        <begin position="143"/>
        <end position="167"/>
    </location>
</feature>
<feature type="compositionally biased region" description="Basic and acidic residues" evidence="3">
    <location>
        <begin position="180"/>
        <end position="193"/>
    </location>
</feature>
<gene>
    <name type="primary">LOC1</name>
    <name type="ORF">PGUG_00653</name>
</gene>
<keyword id="KW-0175">Coiled coil</keyword>
<keyword id="KW-0509">mRNA transport</keyword>
<keyword id="KW-0539">Nucleus</keyword>
<keyword id="KW-1185">Reference proteome</keyword>
<keyword id="KW-0690">Ribosome biogenesis</keyword>
<keyword id="KW-0813">Transport</keyword>
<accession>A5DBJ8</accession>
<dbReference type="EMBL" id="CH408155">
    <property type="protein sequence ID" value="EDK36555.2"/>
    <property type="molecule type" value="Genomic_DNA"/>
</dbReference>
<dbReference type="RefSeq" id="XP_001487276.1">
    <property type="nucleotide sequence ID" value="XM_001487226.1"/>
</dbReference>
<dbReference type="SMR" id="A5DBJ8"/>
<dbReference type="FunCoup" id="A5DBJ8">
    <property type="interactions" value="372"/>
</dbReference>
<dbReference type="STRING" id="294746.A5DBJ8"/>
<dbReference type="GeneID" id="5129351"/>
<dbReference type="KEGG" id="pgu:PGUG_00653"/>
<dbReference type="VEuPathDB" id="FungiDB:PGUG_00653"/>
<dbReference type="eggNOG" id="ENOG502RY6R">
    <property type="taxonomic scope" value="Eukaryota"/>
</dbReference>
<dbReference type="HOGENOM" id="CLU_096593_1_0_1"/>
<dbReference type="InParanoid" id="A5DBJ8"/>
<dbReference type="OMA" id="NAEQEGH"/>
<dbReference type="OrthoDB" id="1743802at2759"/>
<dbReference type="Proteomes" id="UP000001997">
    <property type="component" value="Unassembled WGS sequence"/>
</dbReference>
<dbReference type="GO" id="GO:0005730">
    <property type="term" value="C:nucleolus"/>
    <property type="evidence" value="ECO:0007669"/>
    <property type="project" value="UniProtKB-SubCell"/>
</dbReference>
<dbReference type="GO" id="GO:0030687">
    <property type="term" value="C:preribosome, large subunit precursor"/>
    <property type="evidence" value="ECO:0007669"/>
    <property type="project" value="TreeGrafter"/>
</dbReference>
<dbReference type="GO" id="GO:0003729">
    <property type="term" value="F:mRNA binding"/>
    <property type="evidence" value="ECO:0007669"/>
    <property type="project" value="InterPro"/>
</dbReference>
<dbReference type="GO" id="GO:0008298">
    <property type="term" value="P:intracellular mRNA localization"/>
    <property type="evidence" value="ECO:0007669"/>
    <property type="project" value="TreeGrafter"/>
</dbReference>
<dbReference type="GO" id="GO:0051028">
    <property type="term" value="P:mRNA transport"/>
    <property type="evidence" value="ECO:0007669"/>
    <property type="project" value="UniProtKB-KW"/>
</dbReference>
<dbReference type="GO" id="GO:0042273">
    <property type="term" value="P:ribosomal large subunit biogenesis"/>
    <property type="evidence" value="ECO:0007669"/>
    <property type="project" value="InterPro"/>
</dbReference>
<dbReference type="InterPro" id="IPR037650">
    <property type="entry name" value="Loc1"/>
</dbReference>
<dbReference type="PANTHER" id="PTHR28028">
    <property type="entry name" value="60S RIBOSOMAL SUBUNIT ASSEMBLY/EXPORT PROTEIN LOC1"/>
    <property type="match status" value="1"/>
</dbReference>
<dbReference type="PANTHER" id="PTHR28028:SF1">
    <property type="entry name" value="60S RIBOSOMAL SUBUNIT ASSEMBLY_EXPORT PROTEIN LOC1"/>
    <property type="match status" value="1"/>
</dbReference>